<keyword id="KW-0175">Coiled coil</keyword>
<keyword id="KW-0472">Membrane</keyword>
<keyword id="KW-1185">Reference proteome</keyword>
<keyword id="KW-0732">Signal</keyword>
<keyword id="KW-0812">Transmembrane</keyword>
<keyword id="KW-1133">Transmembrane helix</keyword>
<gene>
    <name evidence="5" type="ordered locus">At1g77220</name>
    <name evidence="6" type="ORF">T14N5.8</name>
</gene>
<accession>Q94CA0</accession>
<accession>O80656</accession>
<proteinExistence type="evidence at transcript level"/>
<protein>
    <recommendedName>
        <fullName evidence="3">Protein LAZ1 homolog 1</fullName>
    </recommendedName>
    <alternativeName>
        <fullName evidence="3">Lazarus1 homolog 1</fullName>
    </alternativeName>
</protein>
<comment type="subcellular location">
    <subcellularLocation>
        <location evidence="1">Membrane</location>
        <topology evidence="1">Multi-pass membrane protein</topology>
    </subcellularLocation>
</comment>
<comment type="similarity">
    <text evidence="4">Belongs to the TMEM184 family.</text>
</comment>
<comment type="sequence caution" evidence="4">
    <conflict type="erroneous gene model prediction">
        <sequence resource="EMBL-CDS" id="AAC34348"/>
    </conflict>
</comment>
<dbReference type="EMBL" id="AC004260">
    <property type="protein sequence ID" value="AAC34348.1"/>
    <property type="status" value="ALT_SEQ"/>
    <property type="molecule type" value="Genomic_DNA"/>
</dbReference>
<dbReference type="EMBL" id="CP002684">
    <property type="protein sequence ID" value="AEE35951.1"/>
    <property type="molecule type" value="Genomic_DNA"/>
</dbReference>
<dbReference type="EMBL" id="AY035035">
    <property type="protein sequence ID" value="AAK59540.1"/>
    <property type="molecule type" value="mRNA"/>
</dbReference>
<dbReference type="EMBL" id="AY113856">
    <property type="protein sequence ID" value="AAM44904.1"/>
    <property type="molecule type" value="mRNA"/>
</dbReference>
<dbReference type="PIR" id="T00451">
    <property type="entry name" value="T00451"/>
</dbReference>
<dbReference type="RefSeq" id="NP_565152.1">
    <property type="nucleotide sequence ID" value="NM_106371.3"/>
</dbReference>
<dbReference type="FunCoup" id="Q94CA0">
    <property type="interactions" value="3039"/>
</dbReference>
<dbReference type="STRING" id="3702.Q94CA0"/>
<dbReference type="PaxDb" id="3702-AT1G77220.1"/>
<dbReference type="ProteomicsDB" id="238408"/>
<dbReference type="EnsemblPlants" id="AT1G77220.1">
    <property type="protein sequence ID" value="AT1G77220.1"/>
    <property type="gene ID" value="AT1G77220"/>
</dbReference>
<dbReference type="GeneID" id="844058"/>
<dbReference type="Gramene" id="AT1G77220.1">
    <property type="protein sequence ID" value="AT1G77220.1"/>
    <property type="gene ID" value="AT1G77220"/>
</dbReference>
<dbReference type="KEGG" id="ath:AT1G77220"/>
<dbReference type="Araport" id="AT1G77220"/>
<dbReference type="TAIR" id="AT1G77220">
    <property type="gene designation" value="LAZ1H1"/>
</dbReference>
<dbReference type="eggNOG" id="KOG2641">
    <property type="taxonomic scope" value="Eukaryota"/>
</dbReference>
<dbReference type="HOGENOM" id="CLU_012923_0_1_1"/>
<dbReference type="InParanoid" id="Q94CA0"/>
<dbReference type="OrthoDB" id="5348404at2759"/>
<dbReference type="PhylomeDB" id="Q94CA0"/>
<dbReference type="PRO" id="PR:Q94CA0"/>
<dbReference type="Proteomes" id="UP000006548">
    <property type="component" value="Chromosome 1"/>
</dbReference>
<dbReference type="ExpressionAtlas" id="Q94CA0">
    <property type="expression patterns" value="baseline and differential"/>
</dbReference>
<dbReference type="GO" id="GO:0009705">
    <property type="term" value="C:plant-type vacuole membrane"/>
    <property type="evidence" value="ECO:0000314"/>
    <property type="project" value="TAIR"/>
</dbReference>
<dbReference type="GO" id="GO:1900458">
    <property type="term" value="P:negative regulation of brassinosteroid mediated signaling pathway"/>
    <property type="evidence" value="ECO:0000316"/>
    <property type="project" value="TAIR"/>
</dbReference>
<dbReference type="GO" id="GO:0007033">
    <property type="term" value="P:vacuole organization"/>
    <property type="evidence" value="ECO:0000316"/>
    <property type="project" value="TAIR"/>
</dbReference>
<dbReference type="GO" id="GO:0098876">
    <property type="term" value="P:vesicle-mediated transport to the plasma membrane"/>
    <property type="evidence" value="ECO:0000316"/>
    <property type="project" value="TAIR"/>
</dbReference>
<dbReference type="InterPro" id="IPR005178">
    <property type="entry name" value="Ostalpha/TMEM184C"/>
</dbReference>
<dbReference type="PANTHER" id="PTHR23423">
    <property type="entry name" value="ORGANIC SOLUTE TRANSPORTER-RELATED"/>
    <property type="match status" value="1"/>
</dbReference>
<dbReference type="Pfam" id="PF03619">
    <property type="entry name" value="Solute_trans_a"/>
    <property type="match status" value="1"/>
</dbReference>
<dbReference type="SMART" id="SM01417">
    <property type="entry name" value="Solute_trans_a"/>
    <property type="match status" value="1"/>
</dbReference>
<organism evidence="7">
    <name type="scientific">Arabidopsis thaliana</name>
    <name type="common">Mouse-ear cress</name>
    <dbReference type="NCBI Taxonomy" id="3702"/>
    <lineage>
        <taxon>Eukaryota</taxon>
        <taxon>Viridiplantae</taxon>
        <taxon>Streptophyta</taxon>
        <taxon>Embryophyta</taxon>
        <taxon>Tracheophyta</taxon>
        <taxon>Spermatophyta</taxon>
        <taxon>Magnoliopsida</taxon>
        <taxon>eudicotyledons</taxon>
        <taxon>Gunneridae</taxon>
        <taxon>Pentapetalae</taxon>
        <taxon>rosids</taxon>
        <taxon>malvids</taxon>
        <taxon>Brassicales</taxon>
        <taxon>Brassicaceae</taxon>
        <taxon>Camelineae</taxon>
        <taxon>Arabidopsis</taxon>
    </lineage>
</organism>
<sequence>MEWRGILCSLLFIVSVGESSSRFGIMWHPNLGVDSGQYLTWPILSASVFVVIAILLPMYLIFEHLASYNQPEEQKFLIGLILMVPVYAVESFLSLVNSEAAFNCEVIRDCYEAFALYCFERYLIACLDGEERTIEFMEQQTVITQSTPLLEGTCSYGVVEHPFPMNCFVKDWSLGPQFYHAVKIGIVQYMILKMICALLAMILEAFGVYGEGKFAWNYGYPYLAVVLNFSQTWALYCLVQFYNVIKDKLAPIKPLAKFLTFKSIVFLTWWQGIIVAFLFSMGLVKGSLAKELKTRIQDYIICIEMGIAAVVHLYVFPAAPYKRGERCVRNVAVMSDYASIDVPPDPEEVKDSERTTRTRYGRHDDREKRLNFPQSVRDVVLGSGEIIVDDMRFTVSHVVEPVERGIAKINRTFHQISENVKRFEQQKKTTKDDSYVIPLNQWAKEFSDVHENLYDGGSVSDSGLGSTNRHHQSRVSGLWTRMRR</sequence>
<evidence type="ECO:0000255" key="1"/>
<evidence type="ECO:0000256" key="2">
    <source>
        <dbReference type="SAM" id="MobiDB-lite"/>
    </source>
</evidence>
<evidence type="ECO:0000303" key="3">
    <source>
    </source>
</evidence>
<evidence type="ECO:0000305" key="4"/>
<evidence type="ECO:0000312" key="5">
    <source>
        <dbReference type="Araport" id="AT1G77220"/>
    </source>
</evidence>
<evidence type="ECO:0000312" key="6">
    <source>
        <dbReference type="EMBL" id="AAC34348.1"/>
    </source>
</evidence>
<evidence type="ECO:0000312" key="7">
    <source>
        <dbReference type="EMBL" id="AAK59540.1"/>
    </source>
</evidence>
<reference key="1">
    <citation type="journal article" date="2000" name="Nature">
        <title>Sequence and analysis of chromosome 1 of the plant Arabidopsis thaliana.</title>
        <authorList>
            <person name="Theologis A."/>
            <person name="Ecker J.R."/>
            <person name="Palm C.J."/>
            <person name="Federspiel N.A."/>
            <person name="Kaul S."/>
            <person name="White O."/>
            <person name="Alonso J."/>
            <person name="Altafi H."/>
            <person name="Araujo R."/>
            <person name="Bowman C.L."/>
            <person name="Brooks S.Y."/>
            <person name="Buehler E."/>
            <person name="Chan A."/>
            <person name="Chao Q."/>
            <person name="Chen H."/>
            <person name="Cheuk R.F."/>
            <person name="Chin C.W."/>
            <person name="Chung M.K."/>
            <person name="Conn L."/>
            <person name="Conway A.B."/>
            <person name="Conway A.R."/>
            <person name="Creasy T.H."/>
            <person name="Dewar K."/>
            <person name="Dunn P."/>
            <person name="Etgu P."/>
            <person name="Feldblyum T.V."/>
            <person name="Feng J.-D."/>
            <person name="Fong B."/>
            <person name="Fujii C.Y."/>
            <person name="Gill J.E."/>
            <person name="Goldsmith A.D."/>
            <person name="Haas B."/>
            <person name="Hansen N.F."/>
            <person name="Hughes B."/>
            <person name="Huizar L."/>
            <person name="Hunter J.L."/>
            <person name="Jenkins J."/>
            <person name="Johnson-Hopson C."/>
            <person name="Khan S."/>
            <person name="Khaykin E."/>
            <person name="Kim C.J."/>
            <person name="Koo H.L."/>
            <person name="Kremenetskaia I."/>
            <person name="Kurtz D.B."/>
            <person name="Kwan A."/>
            <person name="Lam B."/>
            <person name="Langin-Hooper S."/>
            <person name="Lee A."/>
            <person name="Lee J.M."/>
            <person name="Lenz C.A."/>
            <person name="Li J.H."/>
            <person name="Li Y.-P."/>
            <person name="Lin X."/>
            <person name="Liu S.X."/>
            <person name="Liu Z.A."/>
            <person name="Luros J.S."/>
            <person name="Maiti R."/>
            <person name="Marziali A."/>
            <person name="Militscher J."/>
            <person name="Miranda M."/>
            <person name="Nguyen M."/>
            <person name="Nierman W.C."/>
            <person name="Osborne B.I."/>
            <person name="Pai G."/>
            <person name="Peterson J."/>
            <person name="Pham P.K."/>
            <person name="Rizzo M."/>
            <person name="Rooney T."/>
            <person name="Rowley D."/>
            <person name="Sakano H."/>
            <person name="Salzberg S.L."/>
            <person name="Schwartz J.R."/>
            <person name="Shinn P."/>
            <person name="Southwick A.M."/>
            <person name="Sun H."/>
            <person name="Tallon L.J."/>
            <person name="Tambunga G."/>
            <person name="Toriumi M.J."/>
            <person name="Town C.D."/>
            <person name="Utterback T."/>
            <person name="Van Aken S."/>
            <person name="Vaysberg M."/>
            <person name="Vysotskaia V.S."/>
            <person name="Walker M."/>
            <person name="Wu D."/>
            <person name="Yu G."/>
            <person name="Fraser C.M."/>
            <person name="Venter J.C."/>
            <person name="Davis R.W."/>
        </authorList>
    </citation>
    <scope>NUCLEOTIDE SEQUENCE [LARGE SCALE GENOMIC DNA]</scope>
    <source>
        <strain>cv. Columbia</strain>
    </source>
</reference>
<reference key="2">
    <citation type="journal article" date="2017" name="Plant J.">
        <title>Araport11: a complete reannotation of the Arabidopsis thaliana reference genome.</title>
        <authorList>
            <person name="Cheng C.Y."/>
            <person name="Krishnakumar V."/>
            <person name="Chan A.P."/>
            <person name="Thibaud-Nissen F."/>
            <person name="Schobel S."/>
            <person name="Town C.D."/>
        </authorList>
    </citation>
    <scope>GENOME REANNOTATION</scope>
    <source>
        <strain>cv. Columbia</strain>
    </source>
</reference>
<reference key="3">
    <citation type="journal article" date="2003" name="Science">
        <title>Empirical analysis of transcriptional activity in the Arabidopsis genome.</title>
        <authorList>
            <person name="Yamada K."/>
            <person name="Lim J."/>
            <person name="Dale J.M."/>
            <person name="Chen H."/>
            <person name="Shinn P."/>
            <person name="Palm C.J."/>
            <person name="Southwick A.M."/>
            <person name="Wu H.C."/>
            <person name="Kim C.J."/>
            <person name="Nguyen M."/>
            <person name="Pham P.K."/>
            <person name="Cheuk R.F."/>
            <person name="Karlin-Newmann G."/>
            <person name="Liu S.X."/>
            <person name="Lam B."/>
            <person name="Sakano H."/>
            <person name="Wu T."/>
            <person name="Yu G."/>
            <person name="Miranda M."/>
            <person name="Quach H.L."/>
            <person name="Tripp M."/>
            <person name="Chang C.H."/>
            <person name="Lee J.M."/>
            <person name="Toriumi M.J."/>
            <person name="Chan M.M."/>
            <person name="Tang C.C."/>
            <person name="Onodera C.S."/>
            <person name="Deng J.M."/>
            <person name="Akiyama K."/>
            <person name="Ansari Y."/>
            <person name="Arakawa T."/>
            <person name="Banh J."/>
            <person name="Banno F."/>
            <person name="Bowser L."/>
            <person name="Brooks S.Y."/>
            <person name="Carninci P."/>
            <person name="Chao Q."/>
            <person name="Choy N."/>
            <person name="Enju A."/>
            <person name="Goldsmith A.D."/>
            <person name="Gurjal M."/>
            <person name="Hansen N.F."/>
            <person name="Hayashizaki Y."/>
            <person name="Johnson-Hopson C."/>
            <person name="Hsuan V.W."/>
            <person name="Iida K."/>
            <person name="Karnes M."/>
            <person name="Khan S."/>
            <person name="Koesema E."/>
            <person name="Ishida J."/>
            <person name="Jiang P.X."/>
            <person name="Jones T."/>
            <person name="Kawai J."/>
            <person name="Kamiya A."/>
            <person name="Meyers C."/>
            <person name="Nakajima M."/>
            <person name="Narusaka M."/>
            <person name="Seki M."/>
            <person name="Sakurai T."/>
            <person name="Satou M."/>
            <person name="Tamse R."/>
            <person name="Vaysberg M."/>
            <person name="Wallender E.K."/>
            <person name="Wong C."/>
            <person name="Yamamura Y."/>
            <person name="Yuan S."/>
            <person name="Shinozaki K."/>
            <person name="Davis R.W."/>
            <person name="Theologis A."/>
            <person name="Ecker J.R."/>
        </authorList>
    </citation>
    <scope>NUCLEOTIDE SEQUENCE [LARGE SCALE MRNA]</scope>
    <source>
        <strain>cv. Columbia</strain>
    </source>
</reference>
<reference key="4">
    <citation type="journal article" date="2010" name="PLoS ONE">
        <title>Lazarus1, a DUF300 protein, contributes to programmed cell death associated with Arabidopsis acd11 and the hypersensitive response.</title>
        <authorList>
            <person name="Malinovsky F.G."/>
            <person name="Brodersen P."/>
            <person name="Fiil B.K."/>
            <person name="McKinney L.V."/>
            <person name="Thorgrimsen S."/>
            <person name="Beck M."/>
            <person name="Nielsen H.B."/>
            <person name="Pietra S."/>
            <person name="Zipfel C."/>
            <person name="Robatzek S."/>
            <person name="Petersen M."/>
            <person name="Hofius D."/>
            <person name="Mundy J."/>
        </authorList>
    </citation>
    <scope>GENE FAMILY</scope>
</reference>
<feature type="signal peptide" evidence="1">
    <location>
        <begin position="1"/>
        <end position="19"/>
    </location>
</feature>
<feature type="chain" id="PRO_0000432838" description="Protein LAZ1 homolog 1" evidence="1">
    <location>
        <begin position="20"/>
        <end position="484"/>
    </location>
</feature>
<feature type="transmembrane region" description="Helical; Name=1" evidence="1">
    <location>
        <begin position="42"/>
        <end position="62"/>
    </location>
</feature>
<feature type="transmembrane region" description="Helical; Name=2" evidence="1">
    <location>
        <begin position="76"/>
        <end position="96"/>
    </location>
</feature>
<feature type="transmembrane region" description="Helical; Name=3" evidence="1">
    <location>
        <begin position="190"/>
        <end position="210"/>
    </location>
</feature>
<feature type="transmembrane region" description="Helical; Name=4" evidence="1">
    <location>
        <begin position="219"/>
        <end position="239"/>
    </location>
</feature>
<feature type="transmembrane region" description="Helical; Name=5" evidence="1">
    <location>
        <begin position="264"/>
        <end position="284"/>
    </location>
</feature>
<feature type="transmembrane region" description="Helical; Name=6" evidence="1">
    <location>
        <begin position="299"/>
        <end position="319"/>
    </location>
</feature>
<feature type="region of interest" description="Disordered" evidence="2">
    <location>
        <begin position="344"/>
        <end position="364"/>
    </location>
</feature>
<feature type="region of interest" description="Disordered" evidence="2">
    <location>
        <begin position="459"/>
        <end position="484"/>
    </location>
</feature>
<feature type="coiled-coil region" evidence="1">
    <location>
        <begin position="406"/>
        <end position="428"/>
    </location>
</feature>
<feature type="compositionally biased region" description="Basic and acidic residues" evidence="2">
    <location>
        <begin position="347"/>
        <end position="364"/>
    </location>
</feature>
<name>LAZH1_ARATH</name>